<comment type="function">
    <text evidence="1">Catalyzes the transfer of the enolpyruvyl moiety of phosphoenolpyruvate (PEP) to the 5-hydroxyl of shikimate-3-phosphate (S3P) to produce enolpyruvyl shikimate-3-phosphate and inorganic phosphate.</text>
</comment>
<comment type="catalytic activity">
    <reaction evidence="1">
        <text>3-phosphoshikimate + phosphoenolpyruvate = 5-O-(1-carboxyvinyl)-3-phosphoshikimate + phosphate</text>
        <dbReference type="Rhea" id="RHEA:21256"/>
        <dbReference type="ChEBI" id="CHEBI:43474"/>
        <dbReference type="ChEBI" id="CHEBI:57701"/>
        <dbReference type="ChEBI" id="CHEBI:58702"/>
        <dbReference type="ChEBI" id="CHEBI:145989"/>
        <dbReference type="EC" id="2.5.1.19"/>
    </reaction>
    <physiologicalReaction direction="left-to-right" evidence="1">
        <dbReference type="Rhea" id="RHEA:21257"/>
    </physiologicalReaction>
</comment>
<comment type="pathway">
    <text evidence="1">Metabolic intermediate biosynthesis; chorismate biosynthesis; chorismate from D-erythrose 4-phosphate and phosphoenolpyruvate: step 6/7.</text>
</comment>
<comment type="subunit">
    <text evidence="1">Monomer.</text>
</comment>
<comment type="subcellular location">
    <subcellularLocation>
        <location evidence="1">Cytoplasm</location>
    </subcellularLocation>
</comment>
<comment type="similarity">
    <text evidence="1">Belongs to the EPSP synthase family.</text>
</comment>
<gene>
    <name evidence="1" type="primary">aroA</name>
    <name type="ordered locus">XOO2386</name>
</gene>
<evidence type="ECO:0000255" key="1">
    <source>
        <dbReference type="HAMAP-Rule" id="MF_00210"/>
    </source>
</evidence>
<dbReference type="EC" id="2.5.1.19" evidence="1"/>
<dbReference type="EMBL" id="AE013598">
    <property type="protein sequence ID" value="AAW75640.1"/>
    <property type="molecule type" value="Genomic_DNA"/>
</dbReference>
<dbReference type="SMR" id="Q5H081"/>
<dbReference type="STRING" id="291331.XOO2386"/>
<dbReference type="KEGG" id="xoo:XOO2386"/>
<dbReference type="HOGENOM" id="CLU_024321_0_1_6"/>
<dbReference type="UniPathway" id="UPA00053">
    <property type="reaction ID" value="UER00089"/>
</dbReference>
<dbReference type="Proteomes" id="UP000006735">
    <property type="component" value="Chromosome"/>
</dbReference>
<dbReference type="GO" id="GO:0005737">
    <property type="term" value="C:cytoplasm"/>
    <property type="evidence" value="ECO:0007669"/>
    <property type="project" value="UniProtKB-SubCell"/>
</dbReference>
<dbReference type="GO" id="GO:0003866">
    <property type="term" value="F:3-phosphoshikimate 1-carboxyvinyltransferase activity"/>
    <property type="evidence" value="ECO:0007669"/>
    <property type="project" value="UniProtKB-UniRule"/>
</dbReference>
<dbReference type="GO" id="GO:0008652">
    <property type="term" value="P:amino acid biosynthetic process"/>
    <property type="evidence" value="ECO:0007669"/>
    <property type="project" value="UniProtKB-KW"/>
</dbReference>
<dbReference type="GO" id="GO:0009073">
    <property type="term" value="P:aromatic amino acid family biosynthetic process"/>
    <property type="evidence" value="ECO:0007669"/>
    <property type="project" value="UniProtKB-KW"/>
</dbReference>
<dbReference type="GO" id="GO:0009423">
    <property type="term" value="P:chorismate biosynthetic process"/>
    <property type="evidence" value="ECO:0007669"/>
    <property type="project" value="UniProtKB-UniRule"/>
</dbReference>
<dbReference type="CDD" id="cd01556">
    <property type="entry name" value="EPSP_synthase"/>
    <property type="match status" value="1"/>
</dbReference>
<dbReference type="FunFam" id="3.65.10.10:FF:000005">
    <property type="entry name" value="3-phosphoshikimate 1-carboxyvinyltransferase"/>
    <property type="match status" value="1"/>
</dbReference>
<dbReference type="FunFam" id="3.65.10.10:FF:000006">
    <property type="entry name" value="3-phosphoshikimate 1-carboxyvinyltransferase"/>
    <property type="match status" value="1"/>
</dbReference>
<dbReference type="Gene3D" id="3.65.10.10">
    <property type="entry name" value="Enolpyruvate transferase domain"/>
    <property type="match status" value="2"/>
</dbReference>
<dbReference type="HAMAP" id="MF_00210">
    <property type="entry name" value="EPSP_synth"/>
    <property type="match status" value="1"/>
</dbReference>
<dbReference type="InterPro" id="IPR001986">
    <property type="entry name" value="Enolpyruvate_Tfrase_dom"/>
</dbReference>
<dbReference type="InterPro" id="IPR036968">
    <property type="entry name" value="Enolpyruvate_Tfrase_sf"/>
</dbReference>
<dbReference type="InterPro" id="IPR006264">
    <property type="entry name" value="EPSP_synthase"/>
</dbReference>
<dbReference type="InterPro" id="IPR023193">
    <property type="entry name" value="EPSP_synthase_CS"/>
</dbReference>
<dbReference type="InterPro" id="IPR013792">
    <property type="entry name" value="RNA3'P_cycl/enolpyr_Trfase_a/b"/>
</dbReference>
<dbReference type="NCBIfam" id="TIGR01356">
    <property type="entry name" value="aroA"/>
    <property type="match status" value="1"/>
</dbReference>
<dbReference type="PANTHER" id="PTHR21090">
    <property type="entry name" value="AROM/DEHYDROQUINATE SYNTHASE"/>
    <property type="match status" value="1"/>
</dbReference>
<dbReference type="PANTHER" id="PTHR21090:SF5">
    <property type="entry name" value="PENTAFUNCTIONAL AROM POLYPEPTIDE"/>
    <property type="match status" value="1"/>
</dbReference>
<dbReference type="Pfam" id="PF00275">
    <property type="entry name" value="EPSP_synthase"/>
    <property type="match status" value="1"/>
</dbReference>
<dbReference type="PIRSF" id="PIRSF000505">
    <property type="entry name" value="EPSPS"/>
    <property type="match status" value="1"/>
</dbReference>
<dbReference type="SUPFAM" id="SSF55205">
    <property type="entry name" value="EPT/RTPC-like"/>
    <property type="match status" value="1"/>
</dbReference>
<dbReference type="PROSITE" id="PS00104">
    <property type="entry name" value="EPSP_SYNTHASE_1"/>
    <property type="match status" value="1"/>
</dbReference>
<dbReference type="PROSITE" id="PS00885">
    <property type="entry name" value="EPSP_SYNTHASE_2"/>
    <property type="match status" value="1"/>
</dbReference>
<feature type="chain" id="PRO_1000012510" description="3-phosphoshikimate 1-carboxyvinyltransferase">
    <location>
        <begin position="1"/>
        <end position="440"/>
    </location>
</feature>
<feature type="active site" description="Proton acceptor" evidence="1">
    <location>
        <position position="320"/>
    </location>
</feature>
<feature type="binding site" evidence="1">
    <location>
        <position position="26"/>
    </location>
    <ligand>
        <name>3-phosphoshikimate</name>
        <dbReference type="ChEBI" id="CHEBI:145989"/>
    </ligand>
</feature>
<feature type="binding site" evidence="1">
    <location>
        <position position="26"/>
    </location>
    <ligand>
        <name>phosphoenolpyruvate</name>
        <dbReference type="ChEBI" id="CHEBI:58702"/>
    </ligand>
</feature>
<feature type="binding site" evidence="1">
    <location>
        <position position="27"/>
    </location>
    <ligand>
        <name>3-phosphoshikimate</name>
        <dbReference type="ChEBI" id="CHEBI:145989"/>
    </ligand>
</feature>
<feature type="binding site" evidence="1">
    <location>
        <position position="31"/>
    </location>
    <ligand>
        <name>3-phosphoshikimate</name>
        <dbReference type="ChEBI" id="CHEBI:145989"/>
    </ligand>
</feature>
<feature type="binding site" evidence="1">
    <location>
        <position position="99"/>
    </location>
    <ligand>
        <name>phosphoenolpyruvate</name>
        <dbReference type="ChEBI" id="CHEBI:58702"/>
    </ligand>
</feature>
<feature type="binding site" evidence="1">
    <location>
        <position position="127"/>
    </location>
    <ligand>
        <name>phosphoenolpyruvate</name>
        <dbReference type="ChEBI" id="CHEBI:58702"/>
    </ligand>
</feature>
<feature type="binding site" evidence="1">
    <location>
        <position position="172"/>
    </location>
    <ligand>
        <name>3-phosphoshikimate</name>
        <dbReference type="ChEBI" id="CHEBI:145989"/>
    </ligand>
</feature>
<feature type="binding site" evidence="1">
    <location>
        <position position="174"/>
    </location>
    <ligand>
        <name>3-phosphoshikimate</name>
        <dbReference type="ChEBI" id="CHEBI:145989"/>
    </ligand>
</feature>
<feature type="binding site" evidence="1">
    <location>
        <position position="174"/>
    </location>
    <ligand>
        <name>phosphoenolpyruvate</name>
        <dbReference type="ChEBI" id="CHEBI:58702"/>
    </ligand>
</feature>
<feature type="binding site" evidence="1">
    <location>
        <position position="320"/>
    </location>
    <ligand>
        <name>3-phosphoshikimate</name>
        <dbReference type="ChEBI" id="CHEBI:145989"/>
    </ligand>
</feature>
<feature type="binding site" evidence="1">
    <location>
        <position position="347"/>
    </location>
    <ligand>
        <name>3-phosphoshikimate</name>
        <dbReference type="ChEBI" id="CHEBI:145989"/>
    </ligand>
</feature>
<feature type="binding site" evidence="1">
    <location>
        <position position="351"/>
    </location>
    <ligand>
        <name>phosphoenolpyruvate</name>
        <dbReference type="ChEBI" id="CHEBI:58702"/>
    </ligand>
</feature>
<feature type="binding site" evidence="1">
    <location>
        <position position="392"/>
    </location>
    <ligand>
        <name>phosphoenolpyruvate</name>
        <dbReference type="ChEBI" id="CHEBI:58702"/>
    </ligand>
</feature>
<accession>Q5H081</accession>
<keyword id="KW-0028">Amino-acid biosynthesis</keyword>
<keyword id="KW-0057">Aromatic amino acid biosynthesis</keyword>
<keyword id="KW-0963">Cytoplasm</keyword>
<keyword id="KW-1185">Reference proteome</keyword>
<keyword id="KW-0808">Transferase</keyword>
<proteinExistence type="inferred from homology"/>
<organism>
    <name type="scientific">Xanthomonas oryzae pv. oryzae (strain KACC10331 / KXO85)</name>
    <dbReference type="NCBI Taxonomy" id="291331"/>
    <lineage>
        <taxon>Bacteria</taxon>
        <taxon>Pseudomonadati</taxon>
        <taxon>Pseudomonadota</taxon>
        <taxon>Gammaproteobacteria</taxon>
        <taxon>Lysobacterales</taxon>
        <taxon>Lysobacteraceae</taxon>
        <taxon>Xanthomonas</taxon>
    </lineage>
</organism>
<reference key="1">
    <citation type="journal article" date="2005" name="Nucleic Acids Res.">
        <title>The genome sequence of Xanthomonas oryzae pathovar oryzae KACC10331, the bacterial blight pathogen of rice.</title>
        <authorList>
            <person name="Lee B.-M."/>
            <person name="Park Y.-J."/>
            <person name="Park D.-S."/>
            <person name="Kang H.-W."/>
            <person name="Kim J.-G."/>
            <person name="Song E.-S."/>
            <person name="Park I.-C."/>
            <person name="Yoon U.-H."/>
            <person name="Hahn J.-H."/>
            <person name="Koo B.-S."/>
            <person name="Lee G.-B."/>
            <person name="Kim H."/>
            <person name="Park H.-S."/>
            <person name="Yoon K.-O."/>
            <person name="Kim J.-H."/>
            <person name="Jung C.-H."/>
            <person name="Koh N.-H."/>
            <person name="Seo J.-S."/>
            <person name="Go S.-J."/>
        </authorList>
    </citation>
    <scope>NUCLEOTIDE SEQUENCE [LARGE SCALE GENOMIC DNA]</scope>
    <source>
        <strain>KACC10331 / KXO85</strain>
    </source>
</reference>
<name>AROA_XANOR</name>
<protein>
    <recommendedName>
        <fullName evidence="1">3-phosphoshikimate 1-carboxyvinyltransferase</fullName>
        <ecNumber evidence="1">2.5.1.19</ecNumber>
    </recommendedName>
    <alternativeName>
        <fullName evidence="1">5-enolpyruvylshikimate-3-phosphate synthase</fullName>
        <shortName evidence="1">EPSP synthase</shortName>
        <shortName evidence="1">EPSPS</shortName>
    </alternativeName>
</protein>
<sequence>MSSNTHHWIARRGTALQGSLAIPGDKSVSHRAVMFAALADGVSQIDGFLEGEDTRSTAAIFAKLGVRIETPSASQRIVHGVGVDGLQPPTGALDCGNAGTGMRLLAGLLAAQRFDSVLVGDESLSKRPMRRVTGPLAQMGARIDTQDDGTPPLRVHGGQALHGIDFVSPVASAQVKSAVLLAGLYAQGETSVTEPHPTRDYSERMLSAFGVDIDFSPGSARLRGGQRLRATDIAVPADFSSAAFFIVAASIVPDSEVVLRAVGLNPRRTGLLAALRLMGADISEENHAEHGGEPVADLRVRYAPLRGAQIPEALVPDMIDEFPALFVAATAASGQTVVTGAAELRVKESDRLAAMATGLRTLGVQVDETPDGATIHGGSIGSGVIESHGDHRIAMAFAIAGQLSSGSVRVNDVANVATSFPGFDTLAQGAGFGLEAAESG</sequence>